<proteinExistence type="inferred from homology"/>
<comment type="similarity">
    <text evidence="1">Belongs to the UPF0225 family.</text>
</comment>
<gene>
    <name type="ordered locus">Shewmr4_2054</name>
</gene>
<accession>Q0HIJ0</accession>
<sequence>MTHDKNCPCGSQKSYQDCCQALHLGLDSGAQLATSPEQLMRSRYCAFVLKNFDYIIKTHHAAYLDGLTLEQLQQGPHPEWLGLDVLSANDTTQPDGSKFGTVTFKAWYKMNGEIDAIYERSEFIFEQGRWFYTKGHQMHAKLPGRNDPCVCHSGKKFKQCCMKG</sequence>
<evidence type="ECO:0000255" key="1">
    <source>
        <dbReference type="HAMAP-Rule" id="MF_00612"/>
    </source>
</evidence>
<protein>
    <recommendedName>
        <fullName evidence="1">UPF0225 protein Shewmr4_2054</fullName>
    </recommendedName>
</protein>
<feature type="chain" id="PRO_1000056739" description="UPF0225 protein Shewmr4_2054">
    <location>
        <begin position="1"/>
        <end position="164"/>
    </location>
</feature>
<reference key="1">
    <citation type="submission" date="2006-08" db="EMBL/GenBank/DDBJ databases">
        <title>Complete sequence of Shewanella sp. MR-4.</title>
        <authorList>
            <consortium name="US DOE Joint Genome Institute"/>
            <person name="Copeland A."/>
            <person name="Lucas S."/>
            <person name="Lapidus A."/>
            <person name="Barry K."/>
            <person name="Detter J.C."/>
            <person name="Glavina del Rio T."/>
            <person name="Hammon N."/>
            <person name="Israni S."/>
            <person name="Dalin E."/>
            <person name="Tice H."/>
            <person name="Pitluck S."/>
            <person name="Kiss H."/>
            <person name="Brettin T."/>
            <person name="Bruce D."/>
            <person name="Han C."/>
            <person name="Tapia R."/>
            <person name="Gilna P."/>
            <person name="Schmutz J."/>
            <person name="Larimer F."/>
            <person name="Land M."/>
            <person name="Hauser L."/>
            <person name="Kyrpides N."/>
            <person name="Mikhailova N."/>
            <person name="Nealson K."/>
            <person name="Konstantinidis K."/>
            <person name="Klappenbach J."/>
            <person name="Tiedje J."/>
            <person name="Richardson P."/>
        </authorList>
    </citation>
    <scope>NUCLEOTIDE SEQUENCE [LARGE SCALE GENOMIC DNA]</scope>
    <source>
        <strain>MR-4</strain>
    </source>
</reference>
<organism>
    <name type="scientific">Shewanella sp. (strain MR-4)</name>
    <dbReference type="NCBI Taxonomy" id="60480"/>
    <lineage>
        <taxon>Bacteria</taxon>
        <taxon>Pseudomonadati</taxon>
        <taxon>Pseudomonadota</taxon>
        <taxon>Gammaproteobacteria</taxon>
        <taxon>Alteromonadales</taxon>
        <taxon>Shewanellaceae</taxon>
        <taxon>Shewanella</taxon>
    </lineage>
</organism>
<name>Y2054_SHESM</name>
<dbReference type="EMBL" id="CP000446">
    <property type="protein sequence ID" value="ABI39127.1"/>
    <property type="molecule type" value="Genomic_DNA"/>
</dbReference>
<dbReference type="RefSeq" id="WP_011622817.1">
    <property type="nucleotide sequence ID" value="NC_008321.1"/>
</dbReference>
<dbReference type="SMR" id="Q0HIJ0"/>
<dbReference type="KEGG" id="she:Shewmr4_2054"/>
<dbReference type="HOGENOM" id="CLU_099590_0_0_6"/>
<dbReference type="Gene3D" id="3.10.450.50">
    <property type="match status" value="1"/>
</dbReference>
<dbReference type="HAMAP" id="MF_00612">
    <property type="entry name" value="UPF0225"/>
    <property type="match status" value="1"/>
</dbReference>
<dbReference type="InterPro" id="IPR032710">
    <property type="entry name" value="NTF2-like_dom_sf"/>
</dbReference>
<dbReference type="InterPro" id="IPR004027">
    <property type="entry name" value="SEC_C_motif"/>
</dbReference>
<dbReference type="InterPro" id="IPR023006">
    <property type="entry name" value="UPF0225"/>
</dbReference>
<dbReference type="InterPro" id="IPR048469">
    <property type="entry name" value="YchJ-like_M"/>
</dbReference>
<dbReference type="NCBIfam" id="NF002449">
    <property type="entry name" value="PRK01617.1"/>
    <property type="match status" value="1"/>
</dbReference>
<dbReference type="NCBIfam" id="NF002486">
    <property type="entry name" value="PRK01752.1"/>
    <property type="match status" value="1"/>
</dbReference>
<dbReference type="PANTHER" id="PTHR33747:SF1">
    <property type="entry name" value="ADENYLATE CYCLASE-ASSOCIATED CAP C-TERMINAL DOMAIN-CONTAINING PROTEIN"/>
    <property type="match status" value="1"/>
</dbReference>
<dbReference type="PANTHER" id="PTHR33747">
    <property type="entry name" value="UPF0225 PROTEIN SCO1677"/>
    <property type="match status" value="1"/>
</dbReference>
<dbReference type="Pfam" id="PF02810">
    <property type="entry name" value="SEC-C"/>
    <property type="match status" value="2"/>
</dbReference>
<dbReference type="Pfam" id="PF17775">
    <property type="entry name" value="YchJ_M-like"/>
    <property type="match status" value="1"/>
</dbReference>
<dbReference type="SUPFAM" id="SSF54427">
    <property type="entry name" value="NTF2-like"/>
    <property type="match status" value="1"/>
</dbReference>
<dbReference type="SUPFAM" id="SSF103642">
    <property type="entry name" value="Sec-C motif"/>
    <property type="match status" value="1"/>
</dbReference>